<sequence>MEPAFGEVNQLGGVFVNGRPLPNAIRLRIVELAQLGIRPCDISRQLRVSHGCVSKILARYNETGSILPGAIGGSKPRVTTPTVVKHIRTYKQRDPGIFAWEIRDRLLADGVCDKYNVPSVSSISRILRNKIGNLAQQGHYDSYKQHQPTPQPALPYNHIYSYPSPITAAAAKVPTPPGVPAIPGSVAMPRTWPSSHSVTDILGIRSITDQVSDSSPYHSPKVEEWSSLGRNNFPAAAPHAVNGLEKGALEQEAKYGQAPNGLPAVGSFVSASSMAPYPTPAQVSPYMTYSAAPSGYVAGHGWQHAGGTSLSPHNCDIPASLAFKGMQAAREGSHSVTASAL</sequence>
<protein>
    <recommendedName>
        <fullName>Paired box protein Pax-9</fullName>
    </recommendedName>
</protein>
<evidence type="ECO:0000250" key="1"/>
<evidence type="ECO:0000255" key="2">
    <source>
        <dbReference type="PROSITE-ProRule" id="PRU00381"/>
    </source>
</evidence>
<evidence type="ECO:0000269" key="3">
    <source>
    </source>
</evidence>
<evidence type="ECO:0000269" key="4">
    <source>
    </source>
</evidence>
<evidence type="ECO:0000305" key="5"/>
<reference key="1">
    <citation type="journal article" date="2000" name="Biochim. Biophys. Acta">
        <title>Evolutionary conservation of gene structures of the Pax1/9 gene family.</title>
        <authorList>
            <person name="Hetzer-Egger C."/>
            <person name="Schorpp M."/>
            <person name="Boehm T."/>
        </authorList>
    </citation>
    <scope>NUCLEOTIDE SEQUENCE [GENOMIC DNA]</scope>
</reference>
<reference key="2">
    <citation type="journal article" date="2004" name="Genome Res.">
        <title>The status, quality, and expansion of the NIH full-length cDNA project: the Mammalian Gene Collection (MGC).</title>
        <authorList>
            <consortium name="The MGC Project Team"/>
        </authorList>
    </citation>
    <scope>NUCLEOTIDE SEQUENCE [LARGE SCALE MRNA]</scope>
    <source>
        <tissue>Lung</tissue>
    </source>
</reference>
<reference key="3">
    <citation type="journal article" date="1993" name="Nat. Genet.">
        <title>Chromosomal localization of seven PAX genes and cloning of a novel family member, PAX-9.</title>
        <authorList>
            <person name="Stapleton P."/>
            <person name="Weith A."/>
            <person name="Urbanek P."/>
            <person name="Kozmik Z."/>
            <person name="Busslinger M."/>
        </authorList>
    </citation>
    <scope>NUCLEOTIDE SEQUENCE [GENOMIC DNA] OF 1-211</scope>
</reference>
<reference key="4">
    <citation type="journal article" date="1997" name="Mamm. Genome">
        <title>Isolation of the Pax9 cDNA from adult human esophagus.</title>
        <authorList>
            <person name="Peters H."/>
            <person name="Schuster G."/>
            <person name="Neubueser A."/>
            <person name="Richter T."/>
            <person name="Hoefler H."/>
        </authorList>
    </citation>
    <scope>NUCLEOTIDE SEQUENCE [MRNA] OF 9-339</scope>
    <source>
        <tissue>Esophagus</tissue>
    </source>
</reference>
<reference key="5">
    <citation type="journal article" date="2003" name="J. Biol. Chem.">
        <title>Human PLU-1 has transcriptional repression properties and interacts with the developmental transcription factors BF-1 and PAX9.</title>
        <authorList>
            <person name="Tan K."/>
            <person name="Shaw A.L."/>
            <person name="Madsen B."/>
            <person name="Jensen K."/>
            <person name="Taylor-Papadimitriou J."/>
            <person name="Freemont P.S."/>
        </authorList>
    </citation>
    <scope>INTERACTION WITH KDM5B</scope>
    <scope>MUTAGENESIS OF 173-VAL-PRO-174; 179-VAL-PRO-180 AND PRO-189</scope>
    <scope>FUNCTION</scope>
</reference>
<reference key="6">
    <citation type="journal article" date="2003" name="Eur. J. Oral Sci.">
        <title>Novel mutation in the paired box sequence of PAX9 gene in a sporadic form of oligodontia.</title>
        <authorList>
            <person name="Mostowska A."/>
            <person name="Kobielak A."/>
            <person name="Biedziak B."/>
            <person name="Trzeciak W.H."/>
        </authorList>
    </citation>
    <scope>VARIANT STHAG3 SER-51</scope>
</reference>
<dbReference type="EMBL" id="AJ238381">
    <property type="protein sequence ID" value="CAB41533.1"/>
    <property type="molecule type" value="Genomic_DNA"/>
</dbReference>
<dbReference type="EMBL" id="AJ238382">
    <property type="protein sequence ID" value="CAB41533.1"/>
    <property type="status" value="JOINED"/>
    <property type="molecule type" value="Genomic_DNA"/>
</dbReference>
<dbReference type="EMBL" id="AJ238383">
    <property type="protein sequence ID" value="CAB41533.1"/>
    <property type="status" value="JOINED"/>
    <property type="molecule type" value="Genomic_DNA"/>
</dbReference>
<dbReference type="EMBL" id="BC001159">
    <property type="protein sequence ID" value="AAH01159.1"/>
    <property type="molecule type" value="mRNA"/>
</dbReference>
<dbReference type="EMBL" id="L09745">
    <property type="status" value="NOT_ANNOTATED_CDS"/>
    <property type="molecule type" value="Genomic_DNA"/>
</dbReference>
<dbReference type="EMBL" id="X92850">
    <property type="protein sequence ID" value="CAA63436.1"/>
    <property type="molecule type" value="mRNA"/>
</dbReference>
<dbReference type="CCDS" id="CCDS9662.1"/>
<dbReference type="PIR" id="S36155">
    <property type="entry name" value="S36155"/>
</dbReference>
<dbReference type="RefSeq" id="NP_001359005.1">
    <property type="nucleotide sequence ID" value="NM_001372076.1"/>
</dbReference>
<dbReference type="RefSeq" id="NP_006185.1">
    <property type="nucleotide sequence ID" value="NM_006194.4"/>
</dbReference>
<dbReference type="SMR" id="P55771"/>
<dbReference type="BioGRID" id="111117">
    <property type="interactions" value="130"/>
</dbReference>
<dbReference type="CORUM" id="P55771"/>
<dbReference type="FunCoup" id="P55771">
    <property type="interactions" value="1655"/>
</dbReference>
<dbReference type="IntAct" id="P55771">
    <property type="interactions" value="122"/>
</dbReference>
<dbReference type="STRING" id="9606.ENSP00000355245"/>
<dbReference type="GlyGen" id="P55771">
    <property type="glycosylation" value="2 sites"/>
</dbReference>
<dbReference type="iPTMnet" id="P55771"/>
<dbReference type="PhosphoSitePlus" id="P55771"/>
<dbReference type="BioMuta" id="PAX9"/>
<dbReference type="DMDM" id="8247954"/>
<dbReference type="jPOST" id="P55771"/>
<dbReference type="MassIVE" id="P55771"/>
<dbReference type="PaxDb" id="9606-ENSP00000355245"/>
<dbReference type="PeptideAtlas" id="P55771"/>
<dbReference type="ProteomicsDB" id="56860"/>
<dbReference type="Pumba" id="P55771"/>
<dbReference type="Antibodypedia" id="9893">
    <property type="antibodies" value="305 antibodies from 36 providers"/>
</dbReference>
<dbReference type="DNASU" id="5083"/>
<dbReference type="Ensembl" id="ENST00000361487.7">
    <property type="protein sequence ID" value="ENSP00000355245.6"/>
    <property type="gene ID" value="ENSG00000198807.13"/>
</dbReference>
<dbReference type="Ensembl" id="ENST00000402703.6">
    <property type="protein sequence ID" value="ENSP00000384817.2"/>
    <property type="gene ID" value="ENSG00000198807.13"/>
</dbReference>
<dbReference type="GeneID" id="5083"/>
<dbReference type="KEGG" id="hsa:5083"/>
<dbReference type="MANE-Select" id="ENST00000361487.7">
    <property type="protein sequence ID" value="ENSP00000355245.6"/>
    <property type="RefSeq nucleotide sequence ID" value="NM_001372076.1"/>
    <property type="RefSeq protein sequence ID" value="NP_001359005.1"/>
</dbReference>
<dbReference type="AGR" id="HGNC:8623"/>
<dbReference type="CTD" id="5083"/>
<dbReference type="DisGeNET" id="5083"/>
<dbReference type="GeneCards" id="PAX9"/>
<dbReference type="HGNC" id="HGNC:8623">
    <property type="gene designation" value="PAX9"/>
</dbReference>
<dbReference type="HPA" id="ENSG00000198807">
    <property type="expression patterns" value="Group enriched (esophagus, lymphoid tissue, parathyroid gland, salivary gland)"/>
</dbReference>
<dbReference type="MalaCards" id="PAX9"/>
<dbReference type="MIM" id="167416">
    <property type="type" value="gene"/>
</dbReference>
<dbReference type="MIM" id="604625">
    <property type="type" value="phenotype"/>
</dbReference>
<dbReference type="neXtProt" id="NX_P55771"/>
<dbReference type="OpenTargets" id="ENSG00000198807"/>
<dbReference type="Orphanet" id="99798">
    <property type="disease" value="Oligodontia"/>
</dbReference>
<dbReference type="PharmGKB" id="PA32963"/>
<dbReference type="VEuPathDB" id="HostDB:ENSG00000198807"/>
<dbReference type="eggNOG" id="KOG3517">
    <property type="taxonomic scope" value="Eukaryota"/>
</dbReference>
<dbReference type="GeneTree" id="ENSGT00940000159896"/>
<dbReference type="HOGENOM" id="CLU_019281_3_0_1"/>
<dbReference type="InParanoid" id="P55771"/>
<dbReference type="OMA" id="STMAPYP"/>
<dbReference type="OrthoDB" id="3225452at2759"/>
<dbReference type="PAN-GO" id="P55771">
    <property type="GO annotations" value="4 GO annotations based on evolutionary models"/>
</dbReference>
<dbReference type="PhylomeDB" id="P55771"/>
<dbReference type="TreeFam" id="TF315397"/>
<dbReference type="PathwayCommons" id="P55771"/>
<dbReference type="SignaLink" id="P55771"/>
<dbReference type="SIGNOR" id="P55771"/>
<dbReference type="BioGRID-ORCS" id="5083">
    <property type="hits" value="11 hits in 1178 CRISPR screens"/>
</dbReference>
<dbReference type="ChiTaRS" id="PAX9">
    <property type="organism name" value="human"/>
</dbReference>
<dbReference type="GeneWiki" id="PAX9"/>
<dbReference type="GenomeRNAi" id="5083"/>
<dbReference type="Pharos" id="P55771">
    <property type="development level" value="Tbio"/>
</dbReference>
<dbReference type="PRO" id="PR:P55771"/>
<dbReference type="Proteomes" id="UP000005640">
    <property type="component" value="Chromosome 14"/>
</dbReference>
<dbReference type="RNAct" id="P55771">
    <property type="molecule type" value="protein"/>
</dbReference>
<dbReference type="Bgee" id="ENSG00000198807">
    <property type="expression patterns" value="Expressed in lower esophagus mucosa and 89 other cell types or tissues"/>
</dbReference>
<dbReference type="ExpressionAtlas" id="P55771">
    <property type="expression patterns" value="baseline and differential"/>
</dbReference>
<dbReference type="GO" id="GO:0000785">
    <property type="term" value="C:chromatin"/>
    <property type="evidence" value="ECO:0000247"/>
    <property type="project" value="NTNU_SB"/>
</dbReference>
<dbReference type="GO" id="GO:0005730">
    <property type="term" value="C:nucleolus"/>
    <property type="evidence" value="ECO:0000314"/>
    <property type="project" value="HPA"/>
</dbReference>
<dbReference type="GO" id="GO:0005654">
    <property type="term" value="C:nucleoplasm"/>
    <property type="evidence" value="ECO:0000314"/>
    <property type="project" value="HPA"/>
</dbReference>
<dbReference type="GO" id="GO:0001228">
    <property type="term" value="F:DNA-binding transcription activator activity, RNA polymerase II-specific"/>
    <property type="evidence" value="ECO:0007669"/>
    <property type="project" value="Ensembl"/>
</dbReference>
<dbReference type="GO" id="GO:0000981">
    <property type="term" value="F:DNA-binding transcription factor activity, RNA polymerase II-specific"/>
    <property type="evidence" value="ECO:0000247"/>
    <property type="project" value="NTNU_SB"/>
</dbReference>
<dbReference type="GO" id="GO:0000978">
    <property type="term" value="F:RNA polymerase II cis-regulatory region sequence-specific DNA binding"/>
    <property type="evidence" value="ECO:0000318"/>
    <property type="project" value="GO_Central"/>
</dbReference>
<dbReference type="GO" id="GO:1990837">
    <property type="term" value="F:sequence-specific double-stranded DNA binding"/>
    <property type="evidence" value="ECO:0000314"/>
    <property type="project" value="ARUK-UCL"/>
</dbReference>
<dbReference type="GO" id="GO:0071363">
    <property type="term" value="P:cellular response to growth factor stimulus"/>
    <property type="evidence" value="ECO:0007669"/>
    <property type="project" value="Ensembl"/>
</dbReference>
<dbReference type="GO" id="GO:0007492">
    <property type="term" value="P:endoderm development"/>
    <property type="evidence" value="ECO:0007669"/>
    <property type="project" value="Ensembl"/>
</dbReference>
<dbReference type="GO" id="GO:0060325">
    <property type="term" value="P:face morphogenesis"/>
    <property type="evidence" value="ECO:0007669"/>
    <property type="project" value="Ensembl"/>
</dbReference>
<dbReference type="GO" id="GO:0045892">
    <property type="term" value="P:negative regulation of DNA-templated transcription"/>
    <property type="evidence" value="ECO:0000314"/>
    <property type="project" value="UniProtKB"/>
</dbReference>
<dbReference type="GO" id="GO:0042476">
    <property type="term" value="P:odontogenesis"/>
    <property type="evidence" value="ECO:0007669"/>
    <property type="project" value="Ensembl"/>
</dbReference>
<dbReference type="GO" id="GO:0042481">
    <property type="term" value="P:regulation of odontogenesis"/>
    <property type="evidence" value="ECO:0007669"/>
    <property type="project" value="Ensembl"/>
</dbReference>
<dbReference type="GO" id="GO:0006357">
    <property type="term" value="P:regulation of transcription by RNA polymerase II"/>
    <property type="evidence" value="ECO:0000318"/>
    <property type="project" value="GO_Central"/>
</dbReference>
<dbReference type="CDD" id="cd00131">
    <property type="entry name" value="PAX"/>
    <property type="match status" value="1"/>
</dbReference>
<dbReference type="FunFam" id="1.10.10.10:FF:000003">
    <property type="entry name" value="Paired box protein Pax-6"/>
    <property type="match status" value="1"/>
</dbReference>
<dbReference type="FunFam" id="1.10.10.10:FF:000084">
    <property type="entry name" value="paired box protein Pax-9"/>
    <property type="match status" value="1"/>
</dbReference>
<dbReference type="Gene3D" id="1.10.10.10">
    <property type="entry name" value="Winged helix-like DNA-binding domain superfamily/Winged helix DNA-binding domain"/>
    <property type="match status" value="2"/>
</dbReference>
<dbReference type="InterPro" id="IPR009057">
    <property type="entry name" value="Homeodomain-like_sf"/>
</dbReference>
<dbReference type="InterPro" id="IPR043182">
    <property type="entry name" value="PAIRED_DNA-bd_dom"/>
</dbReference>
<dbReference type="InterPro" id="IPR001523">
    <property type="entry name" value="Paired_dom"/>
</dbReference>
<dbReference type="InterPro" id="IPR043565">
    <property type="entry name" value="PAX_fam"/>
</dbReference>
<dbReference type="InterPro" id="IPR036388">
    <property type="entry name" value="WH-like_DNA-bd_sf"/>
</dbReference>
<dbReference type="PANTHER" id="PTHR45636">
    <property type="entry name" value="PAIRED BOX PROTEIN PAX-6-RELATED-RELATED"/>
    <property type="match status" value="1"/>
</dbReference>
<dbReference type="PANTHER" id="PTHR45636:SF13">
    <property type="entry name" value="PAIRED BOX PROTEIN PAX-9"/>
    <property type="match status" value="1"/>
</dbReference>
<dbReference type="Pfam" id="PF00292">
    <property type="entry name" value="PAX"/>
    <property type="match status" value="1"/>
</dbReference>
<dbReference type="PRINTS" id="PR00027">
    <property type="entry name" value="PAIREDBOX"/>
</dbReference>
<dbReference type="SMART" id="SM00351">
    <property type="entry name" value="PAX"/>
    <property type="match status" value="1"/>
</dbReference>
<dbReference type="SUPFAM" id="SSF46689">
    <property type="entry name" value="Homeodomain-like"/>
    <property type="match status" value="1"/>
</dbReference>
<dbReference type="PROSITE" id="PS00034">
    <property type="entry name" value="PAIRED_1"/>
    <property type="match status" value="1"/>
</dbReference>
<dbReference type="PROSITE" id="PS51057">
    <property type="entry name" value="PAIRED_2"/>
    <property type="match status" value="1"/>
</dbReference>
<comment type="function">
    <text evidence="1 3">Transcription factor required for normal development of thymus, parathyroid glands, ultimobranchial bodies, teeth, skeletal elements of skull and larynx as well as distal limbs.</text>
</comment>
<comment type="subunit">
    <text evidence="3">Interacts with KDM5B.</text>
</comment>
<comment type="interaction">
    <interactant intactId="EBI-12111000">
        <id>P55771</id>
    </interactant>
    <interactant intactId="EBI-12807776">
        <id>O00167-2</id>
        <label>EYA2</label>
    </interactant>
    <organismsDiffer>false</organismsDiffer>
    <experiments>3</experiments>
</comment>
<comment type="interaction">
    <interactant intactId="EBI-12111000">
        <id>P55771</id>
    </interactant>
    <interactant intactId="EBI-7232405">
        <id>O43474</id>
        <label>KLF4</label>
    </interactant>
    <organismsDiffer>false</organismsDiffer>
    <experiments>3</experiments>
</comment>
<comment type="interaction">
    <interactant intactId="EBI-12111000">
        <id>P55771</id>
    </interactant>
    <interactant intactId="EBI-10241252">
        <id>Q3SY46</id>
        <label>KRTAP13-3</label>
    </interactant>
    <organismsDiffer>false</organismsDiffer>
    <experiments>3</experiments>
</comment>
<comment type="interaction">
    <interactant intactId="EBI-12111000">
        <id>P55771</id>
    </interactant>
    <interactant intactId="EBI-11959475">
        <id>P25791-3</id>
        <label>LMO2</label>
    </interactant>
    <organismsDiffer>false</organismsDiffer>
    <experiments>3</experiments>
</comment>
<comment type="interaction">
    <interactant intactId="EBI-12111000">
        <id>P55771</id>
    </interactant>
    <interactant intactId="EBI-6952711">
        <id>Q8WY64</id>
        <label>MYLIP</label>
    </interactant>
    <organismsDiffer>false</organismsDiffer>
    <experiments>6</experiments>
</comment>
<comment type="interaction">
    <interactant intactId="EBI-12111000">
        <id>P55771</id>
    </interactant>
    <interactant intactId="EBI-357275">
        <id>Q99471</id>
        <label>PFDN5</label>
    </interactant>
    <organismsDiffer>false</organismsDiffer>
    <experiments>3</experiments>
</comment>
<comment type="interaction">
    <interactant intactId="EBI-12111000">
        <id>P55771</id>
    </interactant>
    <interactant intactId="EBI-2876622">
        <id>Q9UPG8</id>
        <label>PLAGL2</label>
    </interactant>
    <organismsDiffer>false</organismsDiffer>
    <experiments>5</experiments>
</comment>
<comment type="interaction">
    <interactant intactId="EBI-12111000">
        <id>P55771</id>
    </interactant>
    <interactant intactId="EBI-476295">
        <id>P31947</id>
        <label>SFN</label>
    </interactant>
    <organismsDiffer>false</organismsDiffer>
    <experiments>3</experiments>
</comment>
<comment type="interaction">
    <interactant intactId="EBI-12111000">
        <id>P55771</id>
    </interactant>
    <interactant intactId="EBI-10269374">
        <id>Q8ND83</id>
        <label>SLAIN1</label>
    </interactant>
    <organismsDiffer>false</organismsDiffer>
    <experiments>3</experiments>
</comment>
<comment type="interaction">
    <interactant intactId="EBI-12111000">
        <id>P55771</id>
    </interactant>
    <interactant intactId="EBI-11139477">
        <id>Q96N21</id>
        <label>TEPSIN</label>
    </interactant>
    <organismsDiffer>false</organismsDiffer>
    <experiments>3</experiments>
</comment>
<comment type="interaction">
    <interactant intactId="EBI-12111000">
        <id>P55771</id>
    </interactant>
    <interactant intactId="EBI-11741437">
        <id>Q08117-2</id>
        <label>TLE5</label>
    </interactant>
    <organismsDiffer>false</organismsDiffer>
    <experiments>3</experiments>
</comment>
<comment type="interaction">
    <interactant intactId="EBI-12111000">
        <id>P55771</id>
    </interactant>
    <interactant intactId="EBI-358993">
        <id>Q15645</id>
        <label>TRIP13</label>
    </interactant>
    <organismsDiffer>false</organismsDiffer>
    <experiments>3</experiments>
</comment>
<comment type="interaction">
    <interactant intactId="EBI-12111000">
        <id>P55771</id>
    </interactant>
    <interactant intactId="EBI-2559305">
        <id>A5D8V6</id>
        <label>VPS37C</label>
    </interactant>
    <organismsDiffer>false</organismsDiffer>
    <experiments>3</experiments>
</comment>
<comment type="interaction">
    <interactant intactId="EBI-12111000">
        <id>P55771</id>
    </interactant>
    <interactant intactId="EBI-12040603">
        <id>Q9NZC7-5</id>
        <label>WWOX</label>
    </interactant>
    <organismsDiffer>false</organismsDiffer>
    <experiments>3</experiments>
</comment>
<comment type="interaction">
    <interactant intactId="EBI-12111000">
        <id>P55771</id>
    </interactant>
    <interactant intactId="EBI-10252492">
        <id>Q6P1L6</id>
        <label>ZNF343</label>
    </interactant>
    <organismsDiffer>false</organismsDiffer>
    <experiments>3</experiments>
</comment>
<comment type="subcellular location">
    <subcellularLocation>
        <location>Nucleus</location>
    </subcellularLocation>
</comment>
<comment type="disease" evidence="4">
    <disease id="DI-02091">
        <name>Tooth agenesis, selective, 3</name>
        <acronym>STHAG3</acronym>
        <description>A form of selective tooth agenesis, a common anomaly characterized by the congenital absence of one or more teeth. Selective tooth agenesis without associated systemic disorders has sometimes been divided into 2 types: oligodontia, defined as agenesis of 6 or more permanent teeth, and hypodontia, defined as agenesis of less than 6 teeth. The number in both cases does not include absence of third molars (wisdom teeth).</description>
        <dbReference type="MIM" id="604625"/>
    </disease>
    <text>The disease is caused by variants affecting the gene represented in this entry.</text>
</comment>
<comment type="online information" name="Atlas of Genetics and Cytogenetics in Oncology and Haematology">
    <link uri="https://atlasgeneticsoncology.org/gene/41644/PAX9"/>
</comment>
<keyword id="KW-0217">Developmental protein</keyword>
<keyword id="KW-0225">Disease variant</keyword>
<keyword id="KW-0238">DNA-binding</keyword>
<keyword id="KW-0539">Nucleus</keyword>
<keyword id="KW-0563">Paired box</keyword>
<keyword id="KW-1267">Proteomics identification</keyword>
<keyword id="KW-1185">Reference proteome</keyword>
<keyword id="KW-0804">Transcription</keyword>
<keyword id="KW-0805">Transcription regulation</keyword>
<accession>P55771</accession>
<accession>Q99582</accession>
<accession>Q9UQR4</accession>
<organism>
    <name type="scientific">Homo sapiens</name>
    <name type="common">Human</name>
    <dbReference type="NCBI Taxonomy" id="9606"/>
    <lineage>
        <taxon>Eukaryota</taxon>
        <taxon>Metazoa</taxon>
        <taxon>Chordata</taxon>
        <taxon>Craniata</taxon>
        <taxon>Vertebrata</taxon>
        <taxon>Euteleostomi</taxon>
        <taxon>Mammalia</taxon>
        <taxon>Eutheria</taxon>
        <taxon>Euarchontoglires</taxon>
        <taxon>Primates</taxon>
        <taxon>Haplorrhini</taxon>
        <taxon>Catarrhini</taxon>
        <taxon>Hominidae</taxon>
        <taxon>Homo</taxon>
    </lineage>
</organism>
<proteinExistence type="evidence at protein level"/>
<feature type="chain" id="PRO_0000050203" description="Paired box protein Pax-9">
    <location>
        <begin position="1"/>
        <end position="341"/>
    </location>
</feature>
<feature type="DNA-binding region" description="Paired" evidence="2">
    <location>
        <begin position="4"/>
        <end position="130"/>
    </location>
</feature>
<feature type="region of interest" description="PAI subdomain" evidence="2">
    <location>
        <begin position="7"/>
        <end position="63"/>
    </location>
</feature>
<feature type="region of interest" description="RED subdomain" evidence="2">
    <location>
        <begin position="82"/>
        <end position="130"/>
    </location>
</feature>
<feature type="region of interest" description="Interaction with KDM5B" evidence="3">
    <location>
        <begin position="168"/>
        <end position="189"/>
    </location>
</feature>
<feature type="sequence variant" id="VAR_015698" description="In STHAG3; dbSNP:rs104894469." evidence="4">
    <original>G</original>
    <variation>S</variation>
    <location>
        <position position="51"/>
    </location>
</feature>
<feature type="sequence variant" id="VAR_034371" description="In dbSNP:rs4904210.">
    <original>A</original>
    <variation>P</variation>
    <location>
        <position position="240"/>
    </location>
</feature>
<feature type="mutagenesis site" description="Abolishes interaction with KDM5B." evidence="3">
    <original>VP</original>
    <variation>AA</variation>
    <location>
        <begin position="173"/>
        <end position="174"/>
    </location>
</feature>
<feature type="mutagenesis site" description="Abolishes interaction with KDM5B." evidence="3">
    <original>VP</original>
    <variation>AA</variation>
    <location>
        <begin position="179"/>
        <end position="180"/>
    </location>
</feature>
<feature type="mutagenesis site" description="Abolishes interaction with KDM5B." evidence="3">
    <original>P</original>
    <variation>A</variation>
    <location>
        <position position="189"/>
    </location>
</feature>
<feature type="sequence conflict" description="In Ref. 3; L09745." evidence="5" ref="3">
    <original>V</original>
    <variation>G</variation>
    <location>
        <position position="211"/>
    </location>
</feature>
<gene>
    <name type="primary">PAX9</name>
</gene>
<name>PAX9_HUMAN</name>